<proteinExistence type="inferred from homology"/>
<comment type="function">
    <text evidence="3">Mediates the uptake of pyruvate into mitochondria.</text>
</comment>
<comment type="subunit">
    <text evidence="1">The functional 150 kDa pyruvate import complex is a heteromer of MPC1 and MPC2.</text>
</comment>
<comment type="subcellular location">
    <subcellularLocation>
        <location evidence="3">Mitochondrion inner membrane</location>
        <topology evidence="3">Multi-pass membrane protein</topology>
    </subcellularLocation>
</comment>
<comment type="disruption phenotype">
    <text evidence="3">Viable on standard food, but sensitive to a carbohydrate-only diet, with rapid lethality after transfer to a sucrose medium.</text>
</comment>
<comment type="similarity">
    <text evidence="4">Belongs to the mitochondrial pyruvate carrier (MPC) (TC 2.A.105) family.</text>
</comment>
<sequence length="107" mass="12261">MSIRRAMSTTASKEWRDYFMSTHFWGPVANWGIPVAALADTQKSPKFISGKMTLALTLYSCIFMRFAYKVQPRNWLLFACHATNATAQSIQGLRFLHYNYGSKEQQA</sequence>
<feature type="chain" id="PRO_0000418369" description="Mitochondrial pyruvate carrier 1">
    <location>
        <begin position="1"/>
        <end position="107"/>
    </location>
</feature>
<feature type="transmembrane region" description="Helical" evidence="2">
    <location>
        <begin position="18"/>
        <end position="39"/>
    </location>
</feature>
<feature type="transmembrane region" description="Helical" evidence="2">
    <location>
        <begin position="52"/>
        <end position="68"/>
    </location>
</feature>
<dbReference type="EMBL" id="AE014297">
    <property type="protein sequence ID" value="AAF55610.1"/>
    <property type="molecule type" value="Genomic_DNA"/>
</dbReference>
<dbReference type="EMBL" id="AY095174">
    <property type="protein sequence ID" value="AAM12267.1"/>
    <property type="molecule type" value="mRNA"/>
</dbReference>
<dbReference type="RefSeq" id="NP_001262720.1">
    <property type="nucleotide sequence ID" value="NM_001275791.1"/>
</dbReference>
<dbReference type="RefSeq" id="NP_650762.1">
    <property type="nucleotide sequence ID" value="NM_142505.2"/>
</dbReference>
<dbReference type="SMR" id="Q7KSC4"/>
<dbReference type="BioGRID" id="67272">
    <property type="interactions" value="2"/>
</dbReference>
<dbReference type="ComplexPortal" id="CPX-8068">
    <property type="entry name" value="Mitochondrial pyruvate carrier complex"/>
</dbReference>
<dbReference type="FunCoup" id="Q7KSC4">
    <property type="interactions" value="1593"/>
</dbReference>
<dbReference type="STRING" id="7227.FBpp0306592"/>
<dbReference type="TCDB" id="2.A.105.1.3">
    <property type="family name" value="the mitochondrial pyruvate carrier (mpc) family"/>
</dbReference>
<dbReference type="PaxDb" id="7227-FBpp0083137"/>
<dbReference type="DNASU" id="42268"/>
<dbReference type="EnsemblMetazoa" id="FBtr0083723">
    <property type="protein sequence ID" value="FBpp0083137"/>
    <property type="gene ID" value="FBgn0038662"/>
</dbReference>
<dbReference type="EnsemblMetazoa" id="FBtr0334525">
    <property type="protein sequence ID" value="FBpp0306592"/>
    <property type="gene ID" value="FBgn0038662"/>
</dbReference>
<dbReference type="GeneID" id="42268"/>
<dbReference type="KEGG" id="dme:Dmel_CG14290"/>
<dbReference type="UCSC" id="CG14290-RB">
    <property type="organism name" value="d. melanogaster"/>
</dbReference>
<dbReference type="AGR" id="FB:FBgn0038662"/>
<dbReference type="CTD" id="51660"/>
<dbReference type="FlyBase" id="FBgn0038662">
    <property type="gene designation" value="Mpc1"/>
</dbReference>
<dbReference type="VEuPathDB" id="VectorBase:FBgn0038662"/>
<dbReference type="eggNOG" id="KOG1590">
    <property type="taxonomic scope" value="Eukaryota"/>
</dbReference>
<dbReference type="GeneTree" id="ENSGT00510000046988"/>
<dbReference type="HOGENOM" id="CLU_099502_3_2_1"/>
<dbReference type="InParanoid" id="Q7KSC4"/>
<dbReference type="OMA" id="CTTHFWG"/>
<dbReference type="OrthoDB" id="1697690at2759"/>
<dbReference type="PhylomeDB" id="Q7KSC4"/>
<dbReference type="BioGRID-ORCS" id="42268">
    <property type="hits" value="0 hits in 1 CRISPR screen"/>
</dbReference>
<dbReference type="GenomeRNAi" id="42268"/>
<dbReference type="PRO" id="PR:Q7KSC4"/>
<dbReference type="Proteomes" id="UP000000803">
    <property type="component" value="Chromosome 3R"/>
</dbReference>
<dbReference type="Bgee" id="FBgn0038662">
    <property type="expression patterns" value="Expressed in adult Malpighian tubule (Drosophila) and 196 other cell types or tissues"/>
</dbReference>
<dbReference type="ExpressionAtlas" id="Q7KSC4">
    <property type="expression patterns" value="baseline and differential"/>
</dbReference>
<dbReference type="GO" id="GO:0005743">
    <property type="term" value="C:mitochondrial inner membrane"/>
    <property type="evidence" value="ECO:0000250"/>
    <property type="project" value="FlyBase"/>
</dbReference>
<dbReference type="GO" id="GO:0005739">
    <property type="term" value="C:mitochondrion"/>
    <property type="evidence" value="ECO:0000314"/>
    <property type="project" value="FlyBase"/>
</dbReference>
<dbReference type="GO" id="GO:0050833">
    <property type="term" value="F:pyruvate transmembrane transporter activity"/>
    <property type="evidence" value="ECO:0000250"/>
    <property type="project" value="FlyBase"/>
</dbReference>
<dbReference type="GO" id="GO:0006850">
    <property type="term" value="P:mitochondrial pyruvate transmembrane transport"/>
    <property type="evidence" value="ECO:0000250"/>
    <property type="project" value="FlyBase"/>
</dbReference>
<dbReference type="GO" id="GO:0006090">
    <property type="term" value="P:pyruvate metabolic process"/>
    <property type="evidence" value="ECO:0000315"/>
    <property type="project" value="FlyBase"/>
</dbReference>
<dbReference type="InterPro" id="IPR005336">
    <property type="entry name" value="MPC"/>
</dbReference>
<dbReference type="PANTHER" id="PTHR14154">
    <property type="entry name" value="UPF0041 BRAIN PROTEIN 44-RELATED"/>
    <property type="match status" value="1"/>
</dbReference>
<dbReference type="Pfam" id="PF03650">
    <property type="entry name" value="MPC"/>
    <property type="match status" value="1"/>
</dbReference>
<name>MPC1_DROME</name>
<gene>
    <name type="primary">Mpc1</name>
    <name type="ORF">CG14290</name>
</gene>
<organism>
    <name type="scientific">Drosophila melanogaster</name>
    <name type="common">Fruit fly</name>
    <dbReference type="NCBI Taxonomy" id="7227"/>
    <lineage>
        <taxon>Eukaryota</taxon>
        <taxon>Metazoa</taxon>
        <taxon>Ecdysozoa</taxon>
        <taxon>Arthropoda</taxon>
        <taxon>Hexapoda</taxon>
        <taxon>Insecta</taxon>
        <taxon>Pterygota</taxon>
        <taxon>Neoptera</taxon>
        <taxon>Endopterygota</taxon>
        <taxon>Diptera</taxon>
        <taxon>Brachycera</taxon>
        <taxon>Muscomorpha</taxon>
        <taxon>Ephydroidea</taxon>
        <taxon>Drosophilidae</taxon>
        <taxon>Drosophila</taxon>
        <taxon>Sophophora</taxon>
    </lineage>
</organism>
<accession>Q7KSC4</accession>
<evidence type="ECO:0000250" key="1">
    <source>
        <dbReference type="UniProtKB" id="P63030"/>
    </source>
</evidence>
<evidence type="ECO:0000255" key="2"/>
<evidence type="ECO:0000269" key="3">
    <source>
    </source>
</evidence>
<evidence type="ECO:0000305" key="4"/>
<reference key="1">
    <citation type="journal article" date="2000" name="Science">
        <title>The genome sequence of Drosophila melanogaster.</title>
        <authorList>
            <person name="Adams M.D."/>
            <person name="Celniker S.E."/>
            <person name="Holt R.A."/>
            <person name="Evans C.A."/>
            <person name="Gocayne J.D."/>
            <person name="Amanatides P.G."/>
            <person name="Scherer S.E."/>
            <person name="Li P.W."/>
            <person name="Hoskins R.A."/>
            <person name="Galle R.F."/>
            <person name="George R.A."/>
            <person name="Lewis S.E."/>
            <person name="Richards S."/>
            <person name="Ashburner M."/>
            <person name="Henderson S.N."/>
            <person name="Sutton G.G."/>
            <person name="Wortman J.R."/>
            <person name="Yandell M.D."/>
            <person name="Zhang Q."/>
            <person name="Chen L.X."/>
            <person name="Brandon R.C."/>
            <person name="Rogers Y.-H.C."/>
            <person name="Blazej R.G."/>
            <person name="Champe M."/>
            <person name="Pfeiffer B.D."/>
            <person name="Wan K.H."/>
            <person name="Doyle C."/>
            <person name="Baxter E.G."/>
            <person name="Helt G."/>
            <person name="Nelson C.R."/>
            <person name="Miklos G.L.G."/>
            <person name="Abril J.F."/>
            <person name="Agbayani A."/>
            <person name="An H.-J."/>
            <person name="Andrews-Pfannkoch C."/>
            <person name="Baldwin D."/>
            <person name="Ballew R.M."/>
            <person name="Basu A."/>
            <person name="Baxendale J."/>
            <person name="Bayraktaroglu L."/>
            <person name="Beasley E.M."/>
            <person name="Beeson K.Y."/>
            <person name="Benos P.V."/>
            <person name="Berman B.P."/>
            <person name="Bhandari D."/>
            <person name="Bolshakov S."/>
            <person name="Borkova D."/>
            <person name="Botchan M.R."/>
            <person name="Bouck J."/>
            <person name="Brokstein P."/>
            <person name="Brottier P."/>
            <person name="Burtis K.C."/>
            <person name="Busam D.A."/>
            <person name="Butler H."/>
            <person name="Cadieu E."/>
            <person name="Center A."/>
            <person name="Chandra I."/>
            <person name="Cherry J.M."/>
            <person name="Cawley S."/>
            <person name="Dahlke C."/>
            <person name="Davenport L.B."/>
            <person name="Davies P."/>
            <person name="de Pablos B."/>
            <person name="Delcher A."/>
            <person name="Deng Z."/>
            <person name="Mays A.D."/>
            <person name="Dew I."/>
            <person name="Dietz S.M."/>
            <person name="Dodson K."/>
            <person name="Doup L.E."/>
            <person name="Downes M."/>
            <person name="Dugan-Rocha S."/>
            <person name="Dunkov B.C."/>
            <person name="Dunn P."/>
            <person name="Durbin K.J."/>
            <person name="Evangelista C.C."/>
            <person name="Ferraz C."/>
            <person name="Ferriera S."/>
            <person name="Fleischmann W."/>
            <person name="Fosler C."/>
            <person name="Gabrielian A.E."/>
            <person name="Garg N.S."/>
            <person name="Gelbart W.M."/>
            <person name="Glasser K."/>
            <person name="Glodek A."/>
            <person name="Gong F."/>
            <person name="Gorrell J.H."/>
            <person name="Gu Z."/>
            <person name="Guan P."/>
            <person name="Harris M."/>
            <person name="Harris N.L."/>
            <person name="Harvey D.A."/>
            <person name="Heiman T.J."/>
            <person name="Hernandez J.R."/>
            <person name="Houck J."/>
            <person name="Hostin D."/>
            <person name="Houston K.A."/>
            <person name="Howland T.J."/>
            <person name="Wei M.-H."/>
            <person name="Ibegwam C."/>
            <person name="Jalali M."/>
            <person name="Kalush F."/>
            <person name="Karpen G.H."/>
            <person name="Ke Z."/>
            <person name="Kennison J.A."/>
            <person name="Ketchum K.A."/>
            <person name="Kimmel B.E."/>
            <person name="Kodira C.D."/>
            <person name="Kraft C.L."/>
            <person name="Kravitz S."/>
            <person name="Kulp D."/>
            <person name="Lai Z."/>
            <person name="Lasko P."/>
            <person name="Lei Y."/>
            <person name="Levitsky A.A."/>
            <person name="Li J.H."/>
            <person name="Li Z."/>
            <person name="Liang Y."/>
            <person name="Lin X."/>
            <person name="Liu X."/>
            <person name="Mattei B."/>
            <person name="McIntosh T.C."/>
            <person name="McLeod M.P."/>
            <person name="McPherson D."/>
            <person name="Merkulov G."/>
            <person name="Milshina N.V."/>
            <person name="Mobarry C."/>
            <person name="Morris J."/>
            <person name="Moshrefi A."/>
            <person name="Mount S.M."/>
            <person name="Moy M."/>
            <person name="Murphy B."/>
            <person name="Murphy L."/>
            <person name="Muzny D.M."/>
            <person name="Nelson D.L."/>
            <person name="Nelson D.R."/>
            <person name="Nelson K.A."/>
            <person name="Nixon K."/>
            <person name="Nusskern D.R."/>
            <person name="Pacleb J.M."/>
            <person name="Palazzolo M."/>
            <person name="Pittman G.S."/>
            <person name="Pan S."/>
            <person name="Pollard J."/>
            <person name="Puri V."/>
            <person name="Reese M.G."/>
            <person name="Reinert K."/>
            <person name="Remington K."/>
            <person name="Saunders R.D.C."/>
            <person name="Scheeler F."/>
            <person name="Shen H."/>
            <person name="Shue B.C."/>
            <person name="Siden-Kiamos I."/>
            <person name="Simpson M."/>
            <person name="Skupski M.P."/>
            <person name="Smith T.J."/>
            <person name="Spier E."/>
            <person name="Spradling A.C."/>
            <person name="Stapleton M."/>
            <person name="Strong R."/>
            <person name="Sun E."/>
            <person name="Svirskas R."/>
            <person name="Tector C."/>
            <person name="Turner R."/>
            <person name="Venter E."/>
            <person name="Wang A.H."/>
            <person name="Wang X."/>
            <person name="Wang Z.-Y."/>
            <person name="Wassarman D.A."/>
            <person name="Weinstock G.M."/>
            <person name="Weissenbach J."/>
            <person name="Williams S.M."/>
            <person name="Woodage T."/>
            <person name="Worley K.C."/>
            <person name="Wu D."/>
            <person name="Yang S."/>
            <person name="Yao Q.A."/>
            <person name="Ye J."/>
            <person name="Yeh R.-F."/>
            <person name="Zaveri J.S."/>
            <person name="Zhan M."/>
            <person name="Zhang G."/>
            <person name="Zhao Q."/>
            <person name="Zheng L."/>
            <person name="Zheng X.H."/>
            <person name="Zhong F.N."/>
            <person name="Zhong W."/>
            <person name="Zhou X."/>
            <person name="Zhu S.C."/>
            <person name="Zhu X."/>
            <person name="Smith H.O."/>
            <person name="Gibbs R.A."/>
            <person name="Myers E.W."/>
            <person name="Rubin G.M."/>
            <person name="Venter J.C."/>
        </authorList>
    </citation>
    <scope>NUCLEOTIDE SEQUENCE [LARGE SCALE GENOMIC DNA]</scope>
    <source>
        <strain>Berkeley</strain>
    </source>
</reference>
<reference key="2">
    <citation type="journal article" date="2002" name="Genome Biol.">
        <title>Annotation of the Drosophila melanogaster euchromatic genome: a systematic review.</title>
        <authorList>
            <person name="Misra S."/>
            <person name="Crosby M.A."/>
            <person name="Mungall C.J."/>
            <person name="Matthews B.B."/>
            <person name="Campbell K.S."/>
            <person name="Hradecky P."/>
            <person name="Huang Y."/>
            <person name="Kaminker J.S."/>
            <person name="Millburn G.H."/>
            <person name="Prochnik S.E."/>
            <person name="Smith C.D."/>
            <person name="Tupy J.L."/>
            <person name="Whitfield E.J."/>
            <person name="Bayraktaroglu L."/>
            <person name="Berman B.P."/>
            <person name="Bettencourt B.R."/>
            <person name="Celniker S.E."/>
            <person name="de Grey A.D.N.J."/>
            <person name="Drysdale R.A."/>
            <person name="Harris N.L."/>
            <person name="Richter J."/>
            <person name="Russo S."/>
            <person name="Schroeder A.J."/>
            <person name="Shu S.Q."/>
            <person name="Stapleton M."/>
            <person name="Yamada C."/>
            <person name="Ashburner M."/>
            <person name="Gelbart W.M."/>
            <person name="Rubin G.M."/>
            <person name="Lewis S.E."/>
        </authorList>
    </citation>
    <scope>GENOME REANNOTATION</scope>
    <source>
        <strain>Berkeley</strain>
    </source>
</reference>
<reference key="3">
    <citation type="journal article" date="2002" name="Genome Biol.">
        <title>A Drosophila full-length cDNA resource.</title>
        <authorList>
            <person name="Stapleton M."/>
            <person name="Carlson J.W."/>
            <person name="Brokstein P."/>
            <person name="Yu C."/>
            <person name="Champe M."/>
            <person name="George R.A."/>
            <person name="Guarin H."/>
            <person name="Kronmiller B."/>
            <person name="Pacleb J.M."/>
            <person name="Park S."/>
            <person name="Wan K.H."/>
            <person name="Rubin G.M."/>
            <person name="Celniker S.E."/>
        </authorList>
    </citation>
    <scope>NUCLEOTIDE SEQUENCE [LARGE SCALE MRNA]</scope>
    <source>
        <strain>Berkeley</strain>
    </source>
</reference>
<reference key="4">
    <citation type="journal article" date="2012" name="Science">
        <title>A mitochondrial pyruvate carrier required for pyruvate uptake in yeast, Drosophila, and humans.</title>
        <authorList>
            <person name="Bricker D.K."/>
            <person name="Taylor E.B."/>
            <person name="Schell J.C."/>
            <person name="Orsak T."/>
            <person name="Boutron A."/>
            <person name="Chen Y.C."/>
            <person name="Cox J.E."/>
            <person name="Cardon C.M."/>
            <person name="Van Vranken J.G."/>
            <person name="Dephoure N."/>
            <person name="Redin C."/>
            <person name="Boudina S."/>
            <person name="Gygi S.P."/>
            <person name="Brivet M."/>
            <person name="Thummel C.S."/>
            <person name="Rutter J."/>
        </authorList>
    </citation>
    <scope>FUNCTION</scope>
    <scope>SUBCELLULAR LOCATION</scope>
    <scope>DISRUPTION PHENOTYPE</scope>
</reference>
<keyword id="KW-0472">Membrane</keyword>
<keyword id="KW-0496">Mitochondrion</keyword>
<keyword id="KW-0999">Mitochondrion inner membrane</keyword>
<keyword id="KW-1185">Reference proteome</keyword>
<keyword id="KW-0812">Transmembrane</keyword>
<keyword id="KW-1133">Transmembrane helix</keyword>
<keyword id="KW-0813">Transport</keyword>
<protein>
    <recommendedName>
        <fullName>Mitochondrial pyruvate carrier 1</fullName>
        <shortName>MPC1</shortName>
    </recommendedName>
</protein>